<protein>
    <recommendedName>
        <fullName>Avidin-related protein 1</fullName>
    </recommendedName>
</protein>
<dbReference type="EMBL" id="Z21611">
    <property type="status" value="NOT_ANNOTATED_CDS"/>
    <property type="molecule type" value="Genomic_DNA"/>
</dbReference>
<dbReference type="EMBL" id="Z97063">
    <property type="protein sequence ID" value="CAB09798.1"/>
    <property type="molecule type" value="mRNA"/>
</dbReference>
<dbReference type="PIR" id="S42201">
    <property type="entry name" value="S42201"/>
</dbReference>
<dbReference type="SMR" id="O13153"/>
<dbReference type="FunCoup" id="O13153">
    <property type="interactions" value="7"/>
</dbReference>
<dbReference type="GlyCosmos" id="O13153">
    <property type="glycosylation" value="3 sites, No reported glycans"/>
</dbReference>
<dbReference type="GlyGen" id="O13153">
    <property type="glycosylation" value="3 sites"/>
</dbReference>
<dbReference type="VEuPathDB" id="HostDB:LOC121108602"/>
<dbReference type="InParanoid" id="O13153"/>
<dbReference type="PhylomeDB" id="O13153"/>
<dbReference type="Proteomes" id="UP000000539">
    <property type="component" value="Unassembled WGS sequence"/>
</dbReference>
<dbReference type="GO" id="GO:0005576">
    <property type="term" value="C:extracellular region"/>
    <property type="evidence" value="ECO:0007669"/>
    <property type="project" value="UniProtKB-SubCell"/>
</dbReference>
<dbReference type="GO" id="GO:0009374">
    <property type="term" value="F:biotin binding"/>
    <property type="evidence" value="ECO:0000318"/>
    <property type="project" value="GO_Central"/>
</dbReference>
<dbReference type="FunFam" id="2.40.128.30:FF:000001">
    <property type="entry name" value="Avidin-related protein 2"/>
    <property type="match status" value="1"/>
</dbReference>
<dbReference type="Gene3D" id="2.40.128.30">
    <property type="entry name" value="Avidin-like"/>
    <property type="match status" value="1"/>
</dbReference>
<dbReference type="InterPro" id="IPR005469">
    <property type="entry name" value="Avidin"/>
</dbReference>
<dbReference type="InterPro" id="IPR017889">
    <property type="entry name" value="Avidin-like_CS"/>
</dbReference>
<dbReference type="InterPro" id="IPR036896">
    <property type="entry name" value="Avidin-like_sf"/>
</dbReference>
<dbReference type="InterPro" id="IPR005468">
    <property type="entry name" value="Avidin/str"/>
</dbReference>
<dbReference type="InterPro" id="IPR051764">
    <property type="entry name" value="Avidin/Streptavidin-rel"/>
</dbReference>
<dbReference type="PANTHER" id="PTHR34399:SF3">
    <property type="entry name" value="AVID PROTEIN-RELATED"/>
    <property type="match status" value="1"/>
</dbReference>
<dbReference type="PANTHER" id="PTHR34399">
    <property type="entry name" value="AVIDIN-RELATED"/>
    <property type="match status" value="1"/>
</dbReference>
<dbReference type="Pfam" id="PF01382">
    <property type="entry name" value="Avidin"/>
    <property type="match status" value="1"/>
</dbReference>
<dbReference type="PRINTS" id="PR00709">
    <property type="entry name" value="AVIDIN"/>
</dbReference>
<dbReference type="SUPFAM" id="SSF50876">
    <property type="entry name" value="Avidin/streptavidin"/>
    <property type="match status" value="1"/>
</dbReference>
<dbReference type="PROSITE" id="PS00577">
    <property type="entry name" value="AVIDIN_1"/>
    <property type="match status" value="1"/>
</dbReference>
<dbReference type="PROSITE" id="PS51326">
    <property type="entry name" value="AVIDIN_2"/>
    <property type="match status" value="1"/>
</dbReference>
<comment type="function">
    <text evidence="4">Forms a strong non-covalent specific complex with biotin.</text>
</comment>
<comment type="subunit">
    <text evidence="3 4">Homotetramer.</text>
</comment>
<comment type="subcellular location">
    <subcellularLocation>
        <location evidence="3">Secreted</location>
    </subcellularLocation>
</comment>
<comment type="PTM">
    <text evidence="4">Glycosylated.</text>
</comment>
<comment type="similarity">
    <text evidence="5">Belongs to the avidin/streptavidin family.</text>
</comment>
<proteinExistence type="evidence at protein level"/>
<gene>
    <name type="primary">AVR1</name>
</gene>
<reference key="1">
    <citation type="journal article" date="1988" name="J. Steroid Biochem.">
        <title>Molecular cloning of three structurally related genes for chicken avidin.</title>
        <authorList>
            <person name="Keinaenen R.A."/>
            <person name="Laukkanen M.-L."/>
            <person name="Kulomaa M.S."/>
        </authorList>
    </citation>
    <scope>NUCLEOTIDE SEQUENCE</scope>
    <source>
        <tissue>Oviduct</tissue>
    </source>
</reference>
<reference key="2">
    <citation type="journal article" date="1994" name="Eur. J. Biochem.">
        <title>Molecular cloning and nucleotide sequence of chicken avidin-related genes 1-5.</title>
        <authorList>
            <person name="Keinaenen R.A."/>
            <person name="Wallen M.J."/>
            <person name="Kristo P.A."/>
            <person name="Laukkanen M.O."/>
            <person name="Toimela T.A."/>
            <person name="Helenius M.A."/>
            <person name="Kulomaa M.S."/>
        </authorList>
    </citation>
    <scope>NUCLEOTIDE SEQUENCE [GENOMIC DNA]</scope>
    <source>
        <strain>White leghorn</strain>
        <tissue>Oviduct</tissue>
    </source>
</reference>
<reference key="3">
    <citation type="journal article" date="2002" name="Biochem. J.">
        <title>Chicken avidin-related proteins show altered biotin-binding and physico-chemical properties as compared with avidin.</title>
        <authorList>
            <person name="Laitinen O.H."/>
            <person name="Hytoenen V.P."/>
            <person name="Ahlroth M.K."/>
            <person name="Pentikaeinen O.T."/>
            <person name="Gallagher C."/>
            <person name="Nordlund H.R."/>
            <person name="Ovod V."/>
            <person name="Marttila A.T."/>
            <person name="Porkka E."/>
            <person name="Heino S."/>
            <person name="Johnson M.S."/>
            <person name="Airenne K.J."/>
            <person name="Kulomaa M.S."/>
        </authorList>
    </citation>
    <scope>FUNCTION</scope>
    <scope>SUBUNIT</scope>
    <scope>GLYCOSYLATION</scope>
</reference>
<accession>O13153</accession>
<keyword id="KW-0092">Biotin</keyword>
<keyword id="KW-1015">Disulfide bond</keyword>
<keyword id="KW-0325">Glycoprotein</keyword>
<keyword id="KW-1185">Reference proteome</keyword>
<keyword id="KW-0964">Secreted</keyword>
<keyword id="KW-0732">Signal</keyword>
<evidence type="ECO:0000250" key="1">
    <source>
        <dbReference type="UniProtKB" id="P56732"/>
    </source>
</evidence>
<evidence type="ECO:0000255" key="2"/>
<evidence type="ECO:0000255" key="3">
    <source>
        <dbReference type="PROSITE-ProRule" id="PRU00656"/>
    </source>
</evidence>
<evidence type="ECO:0000269" key="4">
    <source>
    </source>
</evidence>
<evidence type="ECO:0000305" key="5"/>
<sequence length="150" mass="16468">MVHATSPLLLLLLLSLALVAPGLSARKCSLTGKWDNDLGSIMTIGAVNDNGEFNGTYITAVADNPGNITRSPLLGIQHKRACQPTFGFTVHWNFSESTSVFVGQCFVDKSGKEVLKTKWLQRLAVDDISDDWKATRVGNNDFTRQRTVEE</sequence>
<organism>
    <name type="scientific">Gallus gallus</name>
    <name type="common">Chicken</name>
    <dbReference type="NCBI Taxonomy" id="9031"/>
    <lineage>
        <taxon>Eukaryota</taxon>
        <taxon>Metazoa</taxon>
        <taxon>Chordata</taxon>
        <taxon>Craniata</taxon>
        <taxon>Vertebrata</taxon>
        <taxon>Euteleostomi</taxon>
        <taxon>Archelosauria</taxon>
        <taxon>Archosauria</taxon>
        <taxon>Dinosauria</taxon>
        <taxon>Saurischia</taxon>
        <taxon>Theropoda</taxon>
        <taxon>Coelurosauria</taxon>
        <taxon>Aves</taxon>
        <taxon>Neognathae</taxon>
        <taxon>Galloanserae</taxon>
        <taxon>Galliformes</taxon>
        <taxon>Phasianidae</taxon>
        <taxon>Phasianinae</taxon>
        <taxon>Gallus</taxon>
    </lineage>
</organism>
<name>AVR1_CHICK</name>
<feature type="signal peptide" evidence="2">
    <location>
        <begin position="1"/>
        <end position="24"/>
    </location>
</feature>
<feature type="chain" id="PRO_0000002723" description="Avidin-related protein 1">
    <location>
        <begin position="25"/>
        <end position="150"/>
    </location>
</feature>
<feature type="domain" description="Avidin-like" evidence="3">
    <location>
        <begin position="26"/>
        <end position="147"/>
    </location>
</feature>
<feature type="binding site" evidence="1">
    <location>
        <position position="36"/>
    </location>
    <ligand>
        <name>biotin</name>
        <dbReference type="ChEBI" id="CHEBI:57586"/>
    </ligand>
</feature>
<feature type="binding site" evidence="1">
    <location>
        <position position="40"/>
    </location>
    <ligand>
        <name>biotin</name>
        <dbReference type="ChEBI" id="CHEBI:57586"/>
    </ligand>
</feature>
<feature type="binding site" evidence="1">
    <location>
        <position position="57"/>
    </location>
    <ligand>
        <name>biotin</name>
        <dbReference type="ChEBI" id="CHEBI:57586"/>
    </ligand>
</feature>
<feature type="binding site" evidence="1">
    <location>
        <position position="59"/>
    </location>
    <ligand>
        <name>biotin</name>
        <dbReference type="ChEBI" id="CHEBI:57586"/>
    </ligand>
</feature>
<feature type="binding site" evidence="1">
    <location>
        <position position="63"/>
    </location>
    <ligand>
        <name>biotin</name>
        <dbReference type="ChEBI" id="CHEBI:57586"/>
    </ligand>
</feature>
<feature type="binding site" evidence="1">
    <location>
        <position position="95"/>
    </location>
    <ligand>
        <name>biotin</name>
        <dbReference type="ChEBI" id="CHEBI:57586"/>
    </ligand>
</feature>
<feature type="binding site" evidence="1">
    <location>
        <position position="99"/>
    </location>
    <ligand>
        <name>biotin</name>
        <dbReference type="ChEBI" id="CHEBI:57586"/>
    </ligand>
</feature>
<feature type="binding site" evidence="1">
    <location>
        <position position="140"/>
    </location>
    <ligand>
        <name>biotin</name>
        <dbReference type="ChEBI" id="CHEBI:57586"/>
    </ligand>
</feature>
<feature type="glycosylation site" description="N-linked (GlcNAc...) asparagine" evidence="2">
    <location>
        <position position="54"/>
    </location>
</feature>
<feature type="glycosylation site" description="N-linked (GlcNAc...) asparagine" evidence="2">
    <location>
        <position position="67"/>
    </location>
</feature>
<feature type="glycosylation site" description="N-linked (GlcNAc...) asparagine" evidence="2">
    <location>
        <position position="93"/>
    </location>
</feature>
<feature type="disulfide bond" evidence="1">
    <location>
        <begin position="28"/>
        <end position="105"/>
    </location>
</feature>